<organism>
    <name type="scientific">Saccharomyces cerevisiae (strain ATCC 204508 / S288c)</name>
    <name type="common">Baker's yeast</name>
    <dbReference type="NCBI Taxonomy" id="559292"/>
    <lineage>
        <taxon>Eukaryota</taxon>
        <taxon>Fungi</taxon>
        <taxon>Dikarya</taxon>
        <taxon>Ascomycota</taxon>
        <taxon>Saccharomycotina</taxon>
        <taxon>Saccharomycetes</taxon>
        <taxon>Saccharomycetales</taxon>
        <taxon>Saccharomycetaceae</taxon>
        <taxon>Saccharomyces</taxon>
    </lineage>
</organism>
<feature type="chain" id="PRO_0000202948" description="Putative uncharacterized protein YHR219W">
    <location>
        <begin position="1"/>
        <end position="624"/>
    </location>
</feature>
<feature type="region of interest" description="Disordered" evidence="1">
    <location>
        <begin position="113"/>
        <end position="249"/>
    </location>
</feature>
<feature type="compositionally biased region" description="Low complexity" evidence="1">
    <location>
        <begin position="118"/>
        <end position="225"/>
    </location>
</feature>
<feature type="compositionally biased region" description="Basic and acidic residues" evidence="1">
    <location>
        <begin position="226"/>
        <end position="249"/>
    </location>
</feature>
<name>YH19_YEAST</name>
<reference key="1">
    <citation type="journal article" date="1994" name="Science">
        <title>Complete nucleotide sequence of Saccharomyces cerevisiae chromosome VIII.</title>
        <authorList>
            <person name="Johnston M."/>
            <person name="Andrews S."/>
            <person name="Brinkman R."/>
            <person name="Cooper J."/>
            <person name="Ding H."/>
            <person name="Dover J."/>
            <person name="Du Z."/>
            <person name="Favello A."/>
            <person name="Fulton L."/>
            <person name="Gattung S."/>
            <person name="Geisel C."/>
            <person name="Kirsten J."/>
            <person name="Kucaba T."/>
            <person name="Hillier L.W."/>
            <person name="Jier M."/>
            <person name="Johnston L."/>
            <person name="Langston Y."/>
            <person name="Latreille P."/>
            <person name="Louis E.J."/>
            <person name="Macri C."/>
            <person name="Mardis E."/>
            <person name="Menezes S."/>
            <person name="Mouser L."/>
            <person name="Nhan M."/>
            <person name="Rifkin L."/>
            <person name="Riles L."/>
            <person name="St Peter H."/>
            <person name="Trevaskis E."/>
            <person name="Vaughan K."/>
            <person name="Vignati D."/>
            <person name="Wilcox L."/>
            <person name="Wohldman P."/>
            <person name="Waterston R."/>
            <person name="Wilson R."/>
            <person name="Vaudin M."/>
        </authorList>
    </citation>
    <scope>NUCLEOTIDE SEQUENCE [LARGE SCALE GENOMIC DNA]</scope>
    <source>
        <strain>ATCC 204508 / S288c</strain>
    </source>
</reference>
<reference key="2">
    <citation type="journal article" date="2014" name="G3 (Bethesda)">
        <title>The reference genome sequence of Saccharomyces cerevisiae: Then and now.</title>
        <authorList>
            <person name="Engel S.R."/>
            <person name="Dietrich F.S."/>
            <person name="Fisk D.G."/>
            <person name="Binkley G."/>
            <person name="Balakrishnan R."/>
            <person name="Costanzo M.C."/>
            <person name="Dwight S.S."/>
            <person name="Hitz B.C."/>
            <person name="Karra K."/>
            <person name="Nash R.S."/>
            <person name="Weng S."/>
            <person name="Wong E.D."/>
            <person name="Lloyd P."/>
            <person name="Skrzypek M.S."/>
            <person name="Miyasato S.R."/>
            <person name="Simison M."/>
            <person name="Cherry J.M."/>
        </authorList>
    </citation>
    <scope>GENOME REANNOTATION</scope>
    <source>
        <strain>ATCC 204508 / S288c</strain>
    </source>
</reference>
<accession>P38900</accession>
<accession>D3DLH3</accession>
<proteinExistence type="predicted"/>
<evidence type="ECO:0000256" key="1">
    <source>
        <dbReference type="SAM" id="MobiDB-lite"/>
    </source>
</evidence>
<sequence length="624" mass="70128">MDLNQRKEKKGQHVGCCGSRTDLSADTVELIERMDRLAENQATASMSIVALPSSFQESNSSDRCRKYCSSDEDSDTCIHGSANASTNATTNSSTNATTTASINVRTSATTTASINVRTSATTTESTNSNTNATTTESTNSSTNATTTASINVRTSATTTESTNSNTSATTTESTDSNTSATTTESTDSNTSATTTASTNSSTNATTTASTNSSTNATTTESTNASAKEDANKDGNAEDNRFHPVTDINKESYKRKGSQMVLLERKKLKAQFPNTSENMNVLQFLGFRSDEIKHLFLYGIDIYFCPEGVFTQYGLCKGCQKMFELCVCWAGQKVSYRRMAWEALAVERMLRNDEEYKEYLEDIEPYHGDPVGYLKFFSVKRGEIYSQIQRNYAWYLAITRRRETISVLDSTRGKQGSQVFRMSGRQIKELYYKVWSNLRESKTEVLQYFLNWDEKKCREEWEAKDDTVFVEALEKVGVFQRLRSMTSAGLQGPQYVKLQFSRHHRQLRSRYELSLGMHLRDQLALGVTPSKVPHWTAFLSMLIGLFYNKTFRQKLEYLLEQISEVWLLPHWVDLANVEVLAADNTRVPLYMLMVAVHKELDSDDVPDGRFDIILLCRDSSREVGE</sequence>
<dbReference type="EMBL" id="U00029">
    <property type="protein sequence ID" value="AAB69742.1"/>
    <property type="molecule type" value="Genomic_DNA"/>
</dbReference>
<dbReference type="EMBL" id="BK006934">
    <property type="protein sequence ID" value="DAA06917.1"/>
    <property type="molecule type" value="Genomic_DNA"/>
</dbReference>
<dbReference type="PIR" id="S49000">
    <property type="entry name" value="S49000"/>
</dbReference>
<dbReference type="RefSeq" id="NP_012091.3">
    <property type="nucleotide sequence ID" value="NM_001179350.3"/>
</dbReference>
<dbReference type="BioGRID" id="36653">
    <property type="interactions" value="5"/>
</dbReference>
<dbReference type="FunCoup" id="P38900">
    <property type="interactions" value="53"/>
</dbReference>
<dbReference type="IntAct" id="P38900">
    <property type="interactions" value="2"/>
</dbReference>
<dbReference type="STRING" id="4932.YHR219W"/>
<dbReference type="PaxDb" id="4932-YHR219W"/>
<dbReference type="PeptideAtlas" id="P38900"/>
<dbReference type="EnsemblFungi" id="YHR219W_mRNA">
    <property type="protein sequence ID" value="YHR219W"/>
    <property type="gene ID" value="YHR219W"/>
</dbReference>
<dbReference type="GeneID" id="856629"/>
<dbReference type="KEGG" id="sce:YHR219W"/>
<dbReference type="AGR" id="SGD:S000001262"/>
<dbReference type="SGD" id="S000001262">
    <property type="gene designation" value="YHR219W"/>
</dbReference>
<dbReference type="VEuPathDB" id="FungiDB:YHR219W"/>
<dbReference type="eggNOG" id="ENOG502QWCT">
    <property type="taxonomic scope" value="Eukaryota"/>
</dbReference>
<dbReference type="GeneTree" id="ENSGT00940000153173"/>
<dbReference type="HOGENOM" id="CLU_011178_4_1_1"/>
<dbReference type="InParanoid" id="P38900"/>
<dbReference type="OMA" id="XLPPAST"/>
<dbReference type="OrthoDB" id="4070089at2759"/>
<dbReference type="BioCyc" id="YEAST:G3O-31240-MONOMER"/>
<dbReference type="PRO" id="PR:P38900"/>
<dbReference type="Proteomes" id="UP000002311">
    <property type="component" value="Chromosome VIII"/>
</dbReference>
<dbReference type="RNAct" id="P38900">
    <property type="molecule type" value="protein"/>
</dbReference>
<dbReference type="GO" id="GO:0005737">
    <property type="term" value="C:cytoplasm"/>
    <property type="evidence" value="ECO:0000318"/>
    <property type="project" value="GO_Central"/>
</dbReference>
<dbReference type="InterPro" id="IPR051363">
    <property type="entry name" value="RLR_Helicase"/>
</dbReference>
<dbReference type="PANTHER" id="PTHR14074:SF39">
    <property type="entry name" value="FANCONI ANEMIA GROUP M PROTEIN"/>
    <property type="match status" value="1"/>
</dbReference>
<dbReference type="PANTHER" id="PTHR14074">
    <property type="entry name" value="HELICASE WITH DEATH DOMAIN-RELATED"/>
    <property type="match status" value="1"/>
</dbReference>
<gene>
    <name type="ordered locus">YHR219W</name>
</gene>
<keyword id="KW-1185">Reference proteome</keyword>
<protein>
    <recommendedName>
        <fullName>Putative uncharacterized protein YHR219W</fullName>
    </recommendedName>
</protein>